<sequence>MQLTSFTDYGLRALIYMASLPEGRMTSISEVTDVYGVSRNHMVKIINQLSRAGYVTAVRGKNGGIRLGKPASAIRIGDVVRELEPLSLVNCSSEFCHITPACRLKQALSKAVQSFLTELDNYTLADLVEENQPLYKLLLVE</sequence>
<proteinExistence type="inferred from homology"/>
<protein>
    <recommendedName>
        <fullName evidence="1">HTH-type transcriptional repressor NsrR</fullName>
    </recommendedName>
</protein>
<name>NSRR_ECOBW</name>
<gene>
    <name evidence="1" type="primary">nsrR</name>
    <name type="ordered locus">BWG_3890</name>
</gene>
<feature type="chain" id="PRO_1000213751" description="HTH-type transcriptional repressor NsrR">
    <location>
        <begin position="1"/>
        <end position="141"/>
    </location>
</feature>
<feature type="domain" description="HTH rrf2-type" evidence="1">
    <location>
        <begin position="2"/>
        <end position="129"/>
    </location>
</feature>
<feature type="DNA-binding region" description="H-T-H motif" evidence="1">
    <location>
        <begin position="28"/>
        <end position="51"/>
    </location>
</feature>
<feature type="binding site" evidence="1">
    <location>
        <position position="91"/>
    </location>
    <ligand>
        <name>[2Fe-2S] cluster</name>
        <dbReference type="ChEBI" id="CHEBI:190135"/>
    </ligand>
</feature>
<feature type="binding site" evidence="1">
    <location>
        <position position="96"/>
    </location>
    <ligand>
        <name>[2Fe-2S] cluster</name>
        <dbReference type="ChEBI" id="CHEBI:190135"/>
    </ligand>
</feature>
<feature type="binding site" evidence="1">
    <location>
        <position position="102"/>
    </location>
    <ligand>
        <name>[2Fe-2S] cluster</name>
        <dbReference type="ChEBI" id="CHEBI:190135"/>
    </ligand>
</feature>
<evidence type="ECO:0000255" key="1">
    <source>
        <dbReference type="HAMAP-Rule" id="MF_01177"/>
    </source>
</evidence>
<accession>C4ZR55</accession>
<dbReference type="EMBL" id="CP001396">
    <property type="protein sequence ID" value="ACR64326.1"/>
    <property type="molecule type" value="Genomic_DNA"/>
</dbReference>
<dbReference type="RefSeq" id="WP_001177639.1">
    <property type="nucleotide sequence ID" value="NC_012759.1"/>
</dbReference>
<dbReference type="SMR" id="C4ZR55"/>
<dbReference type="GeneID" id="93777643"/>
<dbReference type="KEGG" id="ebw:BWG_3890"/>
<dbReference type="HOGENOM" id="CLU_107144_2_1_6"/>
<dbReference type="GO" id="GO:0005829">
    <property type="term" value="C:cytosol"/>
    <property type="evidence" value="ECO:0007669"/>
    <property type="project" value="TreeGrafter"/>
</dbReference>
<dbReference type="GO" id="GO:0051537">
    <property type="term" value="F:2 iron, 2 sulfur cluster binding"/>
    <property type="evidence" value="ECO:0007669"/>
    <property type="project" value="UniProtKB-KW"/>
</dbReference>
<dbReference type="GO" id="GO:0003700">
    <property type="term" value="F:DNA-binding transcription factor activity"/>
    <property type="evidence" value="ECO:0007669"/>
    <property type="project" value="UniProtKB-UniRule"/>
</dbReference>
<dbReference type="GO" id="GO:0003690">
    <property type="term" value="F:double-stranded DNA binding"/>
    <property type="evidence" value="ECO:0007669"/>
    <property type="project" value="UniProtKB-UniRule"/>
</dbReference>
<dbReference type="GO" id="GO:0005506">
    <property type="term" value="F:iron ion binding"/>
    <property type="evidence" value="ECO:0007669"/>
    <property type="project" value="UniProtKB-UniRule"/>
</dbReference>
<dbReference type="GO" id="GO:0045892">
    <property type="term" value="P:negative regulation of DNA-templated transcription"/>
    <property type="evidence" value="ECO:0007669"/>
    <property type="project" value="InterPro"/>
</dbReference>
<dbReference type="FunFam" id="1.10.10.10:FF:000105">
    <property type="entry name" value="HTH-type transcriptional repressor NsrR"/>
    <property type="match status" value="1"/>
</dbReference>
<dbReference type="Gene3D" id="1.10.10.10">
    <property type="entry name" value="Winged helix-like DNA-binding domain superfamily/Winged helix DNA-binding domain"/>
    <property type="match status" value="1"/>
</dbReference>
<dbReference type="HAMAP" id="MF_01177">
    <property type="entry name" value="HTH_type_NsrR"/>
    <property type="match status" value="1"/>
</dbReference>
<dbReference type="InterPro" id="IPR030489">
    <property type="entry name" value="TR_Rrf2-type_CS"/>
</dbReference>
<dbReference type="InterPro" id="IPR000944">
    <property type="entry name" value="Tscrpt_reg_Rrf2"/>
</dbReference>
<dbReference type="InterPro" id="IPR023761">
    <property type="entry name" value="Tscrpt_rep_HTH_NsrR"/>
</dbReference>
<dbReference type="InterPro" id="IPR036388">
    <property type="entry name" value="WH-like_DNA-bd_sf"/>
</dbReference>
<dbReference type="InterPro" id="IPR036390">
    <property type="entry name" value="WH_DNA-bd_sf"/>
</dbReference>
<dbReference type="NCBIfam" id="NF008240">
    <property type="entry name" value="PRK11014.1"/>
    <property type="match status" value="1"/>
</dbReference>
<dbReference type="NCBIfam" id="TIGR00738">
    <property type="entry name" value="rrf2_super"/>
    <property type="match status" value="1"/>
</dbReference>
<dbReference type="PANTHER" id="PTHR33221:SF4">
    <property type="entry name" value="HTH-TYPE TRANSCRIPTIONAL REPRESSOR NSRR"/>
    <property type="match status" value="1"/>
</dbReference>
<dbReference type="PANTHER" id="PTHR33221">
    <property type="entry name" value="WINGED HELIX-TURN-HELIX TRANSCRIPTIONAL REGULATOR, RRF2 FAMILY"/>
    <property type="match status" value="1"/>
</dbReference>
<dbReference type="Pfam" id="PF02082">
    <property type="entry name" value="Rrf2"/>
    <property type="match status" value="1"/>
</dbReference>
<dbReference type="SUPFAM" id="SSF46785">
    <property type="entry name" value="Winged helix' DNA-binding domain"/>
    <property type="match status" value="1"/>
</dbReference>
<dbReference type="PROSITE" id="PS01332">
    <property type="entry name" value="HTH_RRF2_1"/>
    <property type="match status" value="1"/>
</dbReference>
<dbReference type="PROSITE" id="PS51197">
    <property type="entry name" value="HTH_RRF2_2"/>
    <property type="match status" value="1"/>
</dbReference>
<comment type="function">
    <text evidence="1">Nitric oxide-sensitive repressor of genes involved in protecting the cell against nitrosative stress. May require iron for activity.</text>
</comment>
<comment type="cofactor">
    <cofactor evidence="1">
        <name>[2Fe-2S] cluster</name>
        <dbReference type="ChEBI" id="CHEBI:190135"/>
    </cofactor>
    <text evidence="1">Binds 1 [2Fe-2S] cluster per subunit.</text>
</comment>
<reference key="1">
    <citation type="journal article" date="2009" name="J. Bacteriol.">
        <title>Genomic sequencing reveals regulatory mutations and recombinational events in the widely used MC4100 lineage of Escherichia coli K-12.</title>
        <authorList>
            <person name="Ferenci T."/>
            <person name="Zhou Z."/>
            <person name="Betteridge T."/>
            <person name="Ren Y."/>
            <person name="Liu Y."/>
            <person name="Feng L."/>
            <person name="Reeves P.R."/>
            <person name="Wang L."/>
        </authorList>
    </citation>
    <scope>NUCLEOTIDE SEQUENCE [LARGE SCALE GENOMIC DNA]</scope>
    <source>
        <strain>K12 / MC4100 / BW2952</strain>
    </source>
</reference>
<organism>
    <name type="scientific">Escherichia coli (strain K12 / MC4100 / BW2952)</name>
    <dbReference type="NCBI Taxonomy" id="595496"/>
    <lineage>
        <taxon>Bacteria</taxon>
        <taxon>Pseudomonadati</taxon>
        <taxon>Pseudomonadota</taxon>
        <taxon>Gammaproteobacteria</taxon>
        <taxon>Enterobacterales</taxon>
        <taxon>Enterobacteriaceae</taxon>
        <taxon>Escherichia</taxon>
    </lineage>
</organism>
<keyword id="KW-0001">2Fe-2S</keyword>
<keyword id="KW-0238">DNA-binding</keyword>
<keyword id="KW-0408">Iron</keyword>
<keyword id="KW-0411">Iron-sulfur</keyword>
<keyword id="KW-0479">Metal-binding</keyword>
<keyword id="KW-0678">Repressor</keyword>
<keyword id="KW-0804">Transcription</keyword>
<keyword id="KW-0805">Transcription regulation</keyword>